<dbReference type="EC" id="2.1.2.13" evidence="1"/>
<dbReference type="EC" id="1.1.1.305" evidence="1"/>
<dbReference type="EMBL" id="AE005174">
    <property type="protein sequence ID" value="AAG57386.1"/>
    <property type="molecule type" value="Genomic_DNA"/>
</dbReference>
<dbReference type="EMBL" id="BA000007">
    <property type="protein sequence ID" value="BAB36566.1"/>
    <property type="molecule type" value="Genomic_DNA"/>
</dbReference>
<dbReference type="PIR" id="F85865">
    <property type="entry name" value="F85865"/>
</dbReference>
<dbReference type="PIR" id="G91021">
    <property type="entry name" value="G91021"/>
</dbReference>
<dbReference type="RefSeq" id="NP_311170.1">
    <property type="nucleotide sequence ID" value="NC_002695.1"/>
</dbReference>
<dbReference type="RefSeq" id="WP_000860282.1">
    <property type="nucleotide sequence ID" value="NZ_VOAI01000001.1"/>
</dbReference>
<dbReference type="SMR" id="Q8XDZ3"/>
<dbReference type="STRING" id="155864.Z3513"/>
<dbReference type="GeneID" id="916851"/>
<dbReference type="KEGG" id="ece:Z3513"/>
<dbReference type="KEGG" id="ecs:ECs_3143"/>
<dbReference type="PATRIC" id="fig|386585.9.peg.3279"/>
<dbReference type="eggNOG" id="COG0223">
    <property type="taxonomic scope" value="Bacteria"/>
</dbReference>
<dbReference type="eggNOG" id="COG0451">
    <property type="taxonomic scope" value="Bacteria"/>
</dbReference>
<dbReference type="HOGENOM" id="CLU_007383_23_2_6"/>
<dbReference type="OMA" id="VRYCVKY"/>
<dbReference type="UniPathway" id="UPA00030"/>
<dbReference type="UniPathway" id="UPA00032">
    <property type="reaction ID" value="UER00492"/>
</dbReference>
<dbReference type="UniPathway" id="UPA00032">
    <property type="reaction ID" value="UER00494"/>
</dbReference>
<dbReference type="Proteomes" id="UP000000558">
    <property type="component" value="Chromosome"/>
</dbReference>
<dbReference type="Proteomes" id="UP000002519">
    <property type="component" value="Chromosome"/>
</dbReference>
<dbReference type="GO" id="GO:0016020">
    <property type="term" value="C:membrane"/>
    <property type="evidence" value="ECO:0007669"/>
    <property type="project" value="GOC"/>
</dbReference>
<dbReference type="GO" id="GO:0016831">
    <property type="term" value="F:carboxy-lyase activity"/>
    <property type="evidence" value="ECO:0007669"/>
    <property type="project" value="InterPro"/>
</dbReference>
<dbReference type="GO" id="GO:0099619">
    <property type="term" value="F:UDP-4-amino-4-deoxy-L-arabinose formyltransferase activity"/>
    <property type="evidence" value="ECO:0007669"/>
    <property type="project" value="UniProtKB-EC"/>
</dbReference>
<dbReference type="GO" id="GO:0099618">
    <property type="term" value="F:UDP-glucuronate dehydrogenase activity"/>
    <property type="evidence" value="ECO:0007669"/>
    <property type="project" value="UniProtKB-EC"/>
</dbReference>
<dbReference type="GO" id="GO:0009245">
    <property type="term" value="P:lipid A biosynthetic process"/>
    <property type="evidence" value="ECO:0007669"/>
    <property type="project" value="UniProtKB-KW"/>
</dbReference>
<dbReference type="GO" id="GO:0009103">
    <property type="term" value="P:lipopolysaccharide biosynthetic process"/>
    <property type="evidence" value="ECO:0007669"/>
    <property type="project" value="UniProtKB-UniRule"/>
</dbReference>
<dbReference type="GO" id="GO:0046677">
    <property type="term" value="P:response to antibiotic"/>
    <property type="evidence" value="ECO:0007669"/>
    <property type="project" value="UniProtKB-KW"/>
</dbReference>
<dbReference type="CDD" id="cd08702">
    <property type="entry name" value="Arna_FMT_C"/>
    <property type="match status" value="1"/>
</dbReference>
<dbReference type="CDD" id="cd05257">
    <property type="entry name" value="Arna_like_SDR_e"/>
    <property type="match status" value="1"/>
</dbReference>
<dbReference type="CDD" id="cd08644">
    <property type="entry name" value="FMT_core_ArnA_N"/>
    <property type="match status" value="1"/>
</dbReference>
<dbReference type="FunFam" id="3.40.50.12230:FF:000002">
    <property type="entry name" value="Bifunctional polymyxin resistance protein ArnA"/>
    <property type="match status" value="1"/>
</dbReference>
<dbReference type="FunFam" id="3.40.50.720:FF:000197">
    <property type="entry name" value="Bifunctional polymyxin resistance protein ArnA"/>
    <property type="match status" value="1"/>
</dbReference>
<dbReference type="Gene3D" id="3.40.50.12230">
    <property type="match status" value="1"/>
</dbReference>
<dbReference type="Gene3D" id="3.40.50.720">
    <property type="entry name" value="NAD(P)-binding Rossmann-like Domain"/>
    <property type="match status" value="1"/>
</dbReference>
<dbReference type="HAMAP" id="MF_01166">
    <property type="entry name" value="ArnA"/>
    <property type="match status" value="1"/>
</dbReference>
<dbReference type="InterPro" id="IPR045869">
    <property type="entry name" value="Arna-like_SDR_e"/>
</dbReference>
<dbReference type="InterPro" id="IPR021168">
    <property type="entry name" value="Bifun_polymyxin_resist_ArnA"/>
</dbReference>
<dbReference type="InterPro" id="IPR001509">
    <property type="entry name" value="Epimerase_deHydtase"/>
</dbReference>
<dbReference type="InterPro" id="IPR005793">
    <property type="entry name" value="Formyl_trans_C"/>
</dbReference>
<dbReference type="InterPro" id="IPR002376">
    <property type="entry name" value="Formyl_transf_N"/>
</dbReference>
<dbReference type="InterPro" id="IPR036477">
    <property type="entry name" value="Formyl_transf_N_sf"/>
</dbReference>
<dbReference type="InterPro" id="IPR011034">
    <property type="entry name" value="Formyl_transferase-like_C_sf"/>
</dbReference>
<dbReference type="InterPro" id="IPR050177">
    <property type="entry name" value="Lipid_A_modif_metabolic_enz"/>
</dbReference>
<dbReference type="InterPro" id="IPR036291">
    <property type="entry name" value="NAD(P)-bd_dom_sf"/>
</dbReference>
<dbReference type="NCBIfam" id="NF005414">
    <property type="entry name" value="PRK06988.1"/>
    <property type="match status" value="1"/>
</dbReference>
<dbReference type="NCBIfam" id="NF005998">
    <property type="entry name" value="PRK08125.1"/>
    <property type="match status" value="1"/>
</dbReference>
<dbReference type="NCBIfam" id="NF008872">
    <property type="entry name" value="PRK11908.1"/>
    <property type="match status" value="1"/>
</dbReference>
<dbReference type="PANTHER" id="PTHR43245">
    <property type="entry name" value="BIFUNCTIONAL POLYMYXIN RESISTANCE PROTEIN ARNA"/>
    <property type="match status" value="1"/>
</dbReference>
<dbReference type="PANTHER" id="PTHR43245:SF13">
    <property type="entry name" value="UDP-D-APIOSE_UDP-D-XYLOSE SYNTHASE 2"/>
    <property type="match status" value="1"/>
</dbReference>
<dbReference type="Pfam" id="PF01370">
    <property type="entry name" value="Epimerase"/>
    <property type="match status" value="1"/>
</dbReference>
<dbReference type="Pfam" id="PF02911">
    <property type="entry name" value="Formyl_trans_C"/>
    <property type="match status" value="1"/>
</dbReference>
<dbReference type="Pfam" id="PF00551">
    <property type="entry name" value="Formyl_trans_N"/>
    <property type="match status" value="1"/>
</dbReference>
<dbReference type="PIRSF" id="PIRSF036506">
    <property type="entry name" value="Bifun_polymyxin_resist_ArnA"/>
    <property type="match status" value="1"/>
</dbReference>
<dbReference type="SUPFAM" id="SSF50486">
    <property type="entry name" value="FMT C-terminal domain-like"/>
    <property type="match status" value="1"/>
</dbReference>
<dbReference type="SUPFAM" id="SSF53328">
    <property type="entry name" value="Formyltransferase"/>
    <property type="match status" value="1"/>
</dbReference>
<dbReference type="SUPFAM" id="SSF51735">
    <property type="entry name" value="NAD(P)-binding Rossmann-fold domains"/>
    <property type="match status" value="1"/>
</dbReference>
<accession>Q8XDZ3</accession>
<name>ARNA_ECO57</name>
<gene>
    <name evidence="1" type="primary">arnA</name>
    <name type="ordered locus">Z3513</name>
    <name type="ordered locus">ECs3143</name>
</gene>
<organism>
    <name type="scientific">Escherichia coli O157:H7</name>
    <dbReference type="NCBI Taxonomy" id="83334"/>
    <lineage>
        <taxon>Bacteria</taxon>
        <taxon>Pseudomonadati</taxon>
        <taxon>Pseudomonadota</taxon>
        <taxon>Gammaproteobacteria</taxon>
        <taxon>Enterobacterales</taxon>
        <taxon>Enterobacteriaceae</taxon>
        <taxon>Escherichia</taxon>
    </lineage>
</organism>
<comment type="function">
    <text evidence="1">Bifunctional enzyme that catalyzes the oxidative decarboxylation of UDP-glucuronic acid (UDP-GlcUA) to UDP-4-keto-arabinose (UDP-Ara4O) and the addition of a formyl group to UDP-4-amino-4-deoxy-L-arabinose (UDP-L-Ara4N) to form UDP-L-4-formamido-arabinose (UDP-L-Ara4FN). The modified arabinose is attached to lipid A and is required for resistance to polymyxin and cationic antimicrobial peptides.</text>
</comment>
<comment type="catalytic activity">
    <reaction evidence="1">
        <text>UDP-alpha-D-glucuronate + NAD(+) = UDP-beta-L-threo-pentopyranos-4-ulose + CO2 + NADH</text>
        <dbReference type="Rhea" id="RHEA:24702"/>
        <dbReference type="ChEBI" id="CHEBI:16526"/>
        <dbReference type="ChEBI" id="CHEBI:57540"/>
        <dbReference type="ChEBI" id="CHEBI:57945"/>
        <dbReference type="ChEBI" id="CHEBI:58052"/>
        <dbReference type="ChEBI" id="CHEBI:58710"/>
        <dbReference type="EC" id="1.1.1.305"/>
    </reaction>
</comment>
<comment type="catalytic activity">
    <reaction evidence="1">
        <text>UDP-4-amino-4-deoxy-beta-L-arabinose + (6R)-10-formyltetrahydrofolate = UDP-4-deoxy-4-formamido-beta-L-arabinose + (6S)-5,6,7,8-tetrahydrofolate + H(+)</text>
        <dbReference type="Rhea" id="RHEA:24706"/>
        <dbReference type="ChEBI" id="CHEBI:15378"/>
        <dbReference type="ChEBI" id="CHEBI:57453"/>
        <dbReference type="ChEBI" id="CHEBI:58708"/>
        <dbReference type="ChEBI" id="CHEBI:58709"/>
        <dbReference type="ChEBI" id="CHEBI:195366"/>
        <dbReference type="EC" id="2.1.2.13"/>
    </reaction>
</comment>
<comment type="pathway">
    <text evidence="1">Nucleotide-sugar biosynthesis; UDP-4-deoxy-4-formamido-beta-L-arabinose biosynthesis; UDP-4-deoxy-4-formamido-beta-L-arabinose from UDP-alpha-D-glucuronate: step 1/3.</text>
</comment>
<comment type="pathway">
    <text evidence="1">Nucleotide-sugar biosynthesis; UDP-4-deoxy-4-formamido-beta-L-arabinose biosynthesis; UDP-4-deoxy-4-formamido-beta-L-arabinose from UDP-alpha-D-glucuronate: step 3/3.</text>
</comment>
<comment type="pathway">
    <text evidence="1">Bacterial outer membrane biogenesis; lipopolysaccharide biosynthesis.</text>
</comment>
<comment type="subunit">
    <text evidence="1">Homohexamer, formed by a dimer of trimers.</text>
</comment>
<comment type="similarity">
    <text evidence="1">In the N-terminal section; belongs to the Fmt family. UDP-L-Ara4N formyltransferase subfamily.</text>
</comment>
<comment type="similarity">
    <text evidence="1">In the C-terminal section; belongs to the NAD(P)-dependent epimerase/dehydratase family. UDP-glucuronic acid decarboxylase subfamily.</text>
</comment>
<evidence type="ECO:0000255" key="1">
    <source>
        <dbReference type="HAMAP-Rule" id="MF_01166"/>
    </source>
</evidence>
<feature type="chain" id="PRO_0000083099" description="Bifunctional polymyxin resistance protein ArnA">
    <location>
        <begin position="1"/>
        <end position="660"/>
    </location>
</feature>
<feature type="region of interest" description="Formyltransferase ArnAFT">
    <location>
        <begin position="1"/>
        <end position="304"/>
    </location>
</feature>
<feature type="region of interest" description="Dehydrogenase ArnADH">
    <location>
        <begin position="314"/>
        <end position="660"/>
    </location>
</feature>
<feature type="active site" description="Proton donor; for formyltransferase activity" evidence="1">
    <location>
        <position position="104"/>
    </location>
</feature>
<feature type="active site" description="Proton acceptor; for decarboxylase activity" evidence="1">
    <location>
        <position position="434"/>
    </location>
</feature>
<feature type="active site" description="Proton donor; for decarboxylase activity" evidence="1">
    <location>
        <position position="619"/>
    </location>
</feature>
<feature type="binding site" evidence="1">
    <location>
        <begin position="86"/>
        <end position="88"/>
    </location>
    <ligand>
        <name>(6R)-10-formyltetrahydrofolate</name>
        <dbReference type="ChEBI" id="CHEBI:195366"/>
    </ligand>
</feature>
<feature type="binding site" evidence="1">
    <location>
        <position position="114"/>
    </location>
    <ligand>
        <name>(6R)-10-formyltetrahydrofolate</name>
        <dbReference type="ChEBI" id="CHEBI:195366"/>
    </ligand>
</feature>
<feature type="binding site" evidence="1">
    <location>
        <begin position="136"/>
        <end position="140"/>
    </location>
    <ligand>
        <name>(6R)-10-formyltetrahydrofolate</name>
        <dbReference type="ChEBI" id="CHEBI:195366"/>
    </ligand>
</feature>
<feature type="binding site" evidence="1">
    <location>
        <position position="347"/>
    </location>
    <ligand>
        <name>NAD(+)</name>
        <dbReference type="ChEBI" id="CHEBI:57540"/>
    </ligand>
</feature>
<feature type="binding site" evidence="1">
    <location>
        <begin position="368"/>
        <end position="369"/>
    </location>
    <ligand>
        <name>NAD(+)</name>
        <dbReference type="ChEBI" id="CHEBI:57540"/>
    </ligand>
</feature>
<feature type="binding site" evidence="1">
    <location>
        <position position="393"/>
    </location>
    <ligand>
        <name>UDP-alpha-D-glucuronate</name>
        <dbReference type="ChEBI" id="CHEBI:58052"/>
    </ligand>
</feature>
<feature type="binding site" evidence="1">
    <location>
        <position position="398"/>
    </location>
    <ligand>
        <name>UDP-alpha-D-glucuronate</name>
        <dbReference type="ChEBI" id="CHEBI:58052"/>
    </ligand>
</feature>
<feature type="binding site" evidence="1">
    <location>
        <begin position="432"/>
        <end position="433"/>
    </location>
    <ligand>
        <name>UDP-alpha-D-glucuronate</name>
        <dbReference type="ChEBI" id="CHEBI:58052"/>
    </ligand>
</feature>
<feature type="binding site" evidence="1">
    <location>
        <position position="460"/>
    </location>
    <ligand>
        <name>UDP-alpha-D-glucuronate</name>
        <dbReference type="ChEBI" id="CHEBI:58052"/>
    </ligand>
</feature>
<feature type="binding site" evidence="1">
    <location>
        <position position="492"/>
    </location>
    <ligand>
        <name>UDP-alpha-D-glucuronate</name>
        <dbReference type="ChEBI" id="CHEBI:58052"/>
    </ligand>
</feature>
<feature type="binding site" evidence="1">
    <location>
        <begin position="526"/>
        <end position="535"/>
    </location>
    <ligand>
        <name>UDP-alpha-D-glucuronate</name>
        <dbReference type="ChEBI" id="CHEBI:58052"/>
    </ligand>
</feature>
<feature type="binding site" evidence="1">
    <location>
        <position position="613"/>
    </location>
    <ligand>
        <name>UDP-alpha-D-glucuronate</name>
        <dbReference type="ChEBI" id="CHEBI:58052"/>
    </ligand>
</feature>
<feature type="site" description="Transition state stabilizer" evidence="1">
    <location>
        <position position="102"/>
    </location>
</feature>
<feature type="site" description="Raises pKa of active site His" evidence="1">
    <location>
        <position position="140"/>
    </location>
</feature>
<protein>
    <recommendedName>
        <fullName evidence="1">Bifunctional polymyxin resistance protein ArnA</fullName>
    </recommendedName>
    <domain>
        <recommendedName>
            <fullName evidence="1">UDP-4-amino-4-deoxy-L-arabinose formyltransferase</fullName>
            <ecNumber evidence="1">2.1.2.13</ecNumber>
        </recommendedName>
        <alternativeName>
            <fullName evidence="1">ArnAFT</fullName>
        </alternativeName>
        <alternativeName>
            <fullName evidence="1">UDP-L-Ara4N formyltransferase</fullName>
        </alternativeName>
    </domain>
    <domain>
        <recommendedName>
            <fullName evidence="1">UDP-glucuronic acid oxidase, UDP-4-keto-hexauronic acid decarboxylating</fullName>
            <ecNumber evidence="1">1.1.1.305</ecNumber>
        </recommendedName>
        <alternativeName>
            <fullName evidence="1">ArnADH</fullName>
        </alternativeName>
        <alternativeName>
            <fullName evidence="1">UDP-GlcUA decarboxylase</fullName>
        </alternativeName>
        <alternativeName>
            <fullName evidence="1">UDP-glucuronic acid dehydrogenase</fullName>
        </alternativeName>
    </domain>
</protein>
<proteinExistence type="inferred from homology"/>
<sequence length="660" mass="74210">MKTVVFAYHDMGCLGIEALLAAGYEISAIFTHTDNPGEKAFYGSVARLAAERGIPVYAPDNVNHPLWVERIAQLSPEVIFSFYYRHLICDEILQLAPAGAFNLHGSLLPKYRGRAPLNWVLVNGETETGVTLHRMVKRADAGAIVAQLRVAIAPDDIAITLHHKLCHAARQLLEQTLPAIKHGNILEIAQRENEATCFGRRTPDDSFLEWHKPASVLHNMVRAVADPWPGAFSYVGNQKFTVWSSRVHPHASKAQPGSVISVAPLLIACGDGALEIVTGQAGDGITMQGSQLAQTLGLVQGSRLNSQPACTARRRTRVLILGVNGFIGNHLTERLLREDHYEVYGLDIGSDAISRFLNHPHFHFVEGDISIHSEWIEYHVKKCDVVLPLVAIATPIEYTRNPLRVFELDFEENLRIIRYCVKYRKRIIFPSTSEVYGMCSDKYFDEDHSNLIVGPVNKPRWIYSVSKQLLDRVIWAYGEKEGLQFTLFRPFNWMGPRLDNLNAARIGSSRAITQLILNLVEGSPIKLIDGGKQKRCFTDIRDGIEALYRIIENAGNRCDGEIINIGNPENEASIEELGEMLLASFEKHPLRHHFPPFAGFRVVESSSYYGKGYQDVEHRKPSIRNAHHCLDWEPKIDMQETIDETLDFFLRTVDLTDKPS</sequence>
<reference key="1">
    <citation type="journal article" date="2001" name="Nature">
        <title>Genome sequence of enterohaemorrhagic Escherichia coli O157:H7.</title>
        <authorList>
            <person name="Perna N.T."/>
            <person name="Plunkett G. III"/>
            <person name="Burland V."/>
            <person name="Mau B."/>
            <person name="Glasner J.D."/>
            <person name="Rose D.J."/>
            <person name="Mayhew G.F."/>
            <person name="Evans P.S."/>
            <person name="Gregor J."/>
            <person name="Kirkpatrick H.A."/>
            <person name="Posfai G."/>
            <person name="Hackett J."/>
            <person name="Klink S."/>
            <person name="Boutin A."/>
            <person name="Shao Y."/>
            <person name="Miller L."/>
            <person name="Grotbeck E.J."/>
            <person name="Davis N.W."/>
            <person name="Lim A."/>
            <person name="Dimalanta E.T."/>
            <person name="Potamousis K."/>
            <person name="Apodaca J."/>
            <person name="Anantharaman T.S."/>
            <person name="Lin J."/>
            <person name="Yen G."/>
            <person name="Schwartz D.C."/>
            <person name="Welch R.A."/>
            <person name="Blattner F.R."/>
        </authorList>
    </citation>
    <scope>NUCLEOTIDE SEQUENCE [LARGE SCALE GENOMIC DNA]</scope>
    <source>
        <strain>O157:H7 / EDL933 / ATCC 700927 / EHEC</strain>
    </source>
</reference>
<reference key="2">
    <citation type="journal article" date="2001" name="DNA Res.">
        <title>Complete genome sequence of enterohemorrhagic Escherichia coli O157:H7 and genomic comparison with a laboratory strain K-12.</title>
        <authorList>
            <person name="Hayashi T."/>
            <person name="Makino K."/>
            <person name="Ohnishi M."/>
            <person name="Kurokawa K."/>
            <person name="Ishii K."/>
            <person name="Yokoyama K."/>
            <person name="Han C.-G."/>
            <person name="Ohtsubo E."/>
            <person name="Nakayama K."/>
            <person name="Murata T."/>
            <person name="Tanaka M."/>
            <person name="Tobe T."/>
            <person name="Iida T."/>
            <person name="Takami H."/>
            <person name="Honda T."/>
            <person name="Sasakawa C."/>
            <person name="Ogasawara N."/>
            <person name="Yasunaga T."/>
            <person name="Kuhara S."/>
            <person name="Shiba T."/>
            <person name="Hattori M."/>
            <person name="Shinagawa H."/>
        </authorList>
    </citation>
    <scope>NUCLEOTIDE SEQUENCE [LARGE SCALE GENOMIC DNA]</scope>
    <source>
        <strain>O157:H7 / Sakai / RIMD 0509952 / EHEC</strain>
    </source>
</reference>
<keyword id="KW-0046">Antibiotic resistance</keyword>
<keyword id="KW-0441">Lipid A biosynthesis</keyword>
<keyword id="KW-0444">Lipid biosynthesis</keyword>
<keyword id="KW-0443">Lipid metabolism</keyword>
<keyword id="KW-0448">Lipopolysaccharide biosynthesis</keyword>
<keyword id="KW-0511">Multifunctional enzyme</keyword>
<keyword id="KW-0520">NAD</keyword>
<keyword id="KW-0560">Oxidoreductase</keyword>
<keyword id="KW-1185">Reference proteome</keyword>
<keyword id="KW-0808">Transferase</keyword>